<feature type="chain" id="PRO_1000120350" description="GMP synthase [glutamine-hydrolyzing]">
    <location>
        <begin position="1"/>
        <end position="517"/>
    </location>
</feature>
<feature type="domain" description="Glutamine amidotransferase type-1" evidence="1">
    <location>
        <begin position="11"/>
        <end position="202"/>
    </location>
</feature>
<feature type="domain" description="GMPS ATP-PPase" evidence="1">
    <location>
        <begin position="203"/>
        <end position="392"/>
    </location>
</feature>
<feature type="active site" description="Nucleophile" evidence="1">
    <location>
        <position position="88"/>
    </location>
</feature>
<feature type="active site" evidence="1">
    <location>
        <position position="176"/>
    </location>
</feature>
<feature type="active site" evidence="1">
    <location>
        <position position="178"/>
    </location>
</feature>
<feature type="binding site" evidence="1">
    <location>
        <begin position="230"/>
        <end position="236"/>
    </location>
    <ligand>
        <name>ATP</name>
        <dbReference type="ChEBI" id="CHEBI:30616"/>
    </ligand>
</feature>
<dbReference type="EC" id="6.3.5.2" evidence="1"/>
<dbReference type="EMBL" id="CP000422">
    <property type="protein sequence ID" value="ABJ67508.1"/>
    <property type="molecule type" value="Genomic_DNA"/>
</dbReference>
<dbReference type="RefSeq" id="WP_002832859.1">
    <property type="nucleotide sequence ID" value="NC_008525.1"/>
</dbReference>
<dbReference type="SMR" id="Q03H14"/>
<dbReference type="STRING" id="278197.PEPE_0412"/>
<dbReference type="MEROPS" id="C26.957"/>
<dbReference type="GeneID" id="33062353"/>
<dbReference type="KEGG" id="ppe:PEPE_0412"/>
<dbReference type="eggNOG" id="COG0518">
    <property type="taxonomic scope" value="Bacteria"/>
</dbReference>
<dbReference type="eggNOG" id="COG0519">
    <property type="taxonomic scope" value="Bacteria"/>
</dbReference>
<dbReference type="HOGENOM" id="CLU_014340_0_5_9"/>
<dbReference type="OrthoDB" id="9802219at2"/>
<dbReference type="UniPathway" id="UPA00189">
    <property type="reaction ID" value="UER00296"/>
</dbReference>
<dbReference type="Proteomes" id="UP000000773">
    <property type="component" value="Chromosome"/>
</dbReference>
<dbReference type="GO" id="GO:0005829">
    <property type="term" value="C:cytosol"/>
    <property type="evidence" value="ECO:0007669"/>
    <property type="project" value="TreeGrafter"/>
</dbReference>
<dbReference type="GO" id="GO:0005524">
    <property type="term" value="F:ATP binding"/>
    <property type="evidence" value="ECO:0007669"/>
    <property type="project" value="UniProtKB-UniRule"/>
</dbReference>
<dbReference type="GO" id="GO:0003921">
    <property type="term" value="F:GMP synthase activity"/>
    <property type="evidence" value="ECO:0007669"/>
    <property type="project" value="InterPro"/>
</dbReference>
<dbReference type="CDD" id="cd01742">
    <property type="entry name" value="GATase1_GMP_Synthase"/>
    <property type="match status" value="1"/>
</dbReference>
<dbReference type="CDD" id="cd01997">
    <property type="entry name" value="GMP_synthase_C"/>
    <property type="match status" value="1"/>
</dbReference>
<dbReference type="FunFam" id="3.30.300.10:FF:000002">
    <property type="entry name" value="GMP synthase [glutamine-hydrolyzing]"/>
    <property type="match status" value="1"/>
</dbReference>
<dbReference type="FunFam" id="3.40.50.620:FF:000001">
    <property type="entry name" value="GMP synthase [glutamine-hydrolyzing]"/>
    <property type="match status" value="1"/>
</dbReference>
<dbReference type="FunFam" id="3.40.50.880:FF:000001">
    <property type="entry name" value="GMP synthase [glutamine-hydrolyzing]"/>
    <property type="match status" value="1"/>
</dbReference>
<dbReference type="Gene3D" id="3.30.300.10">
    <property type="match status" value="1"/>
</dbReference>
<dbReference type="Gene3D" id="3.40.50.880">
    <property type="match status" value="1"/>
</dbReference>
<dbReference type="Gene3D" id="3.40.50.620">
    <property type="entry name" value="HUPs"/>
    <property type="match status" value="1"/>
</dbReference>
<dbReference type="HAMAP" id="MF_00344">
    <property type="entry name" value="GMP_synthase"/>
    <property type="match status" value="1"/>
</dbReference>
<dbReference type="InterPro" id="IPR029062">
    <property type="entry name" value="Class_I_gatase-like"/>
</dbReference>
<dbReference type="InterPro" id="IPR017926">
    <property type="entry name" value="GATASE"/>
</dbReference>
<dbReference type="InterPro" id="IPR001674">
    <property type="entry name" value="GMP_synth_C"/>
</dbReference>
<dbReference type="InterPro" id="IPR004739">
    <property type="entry name" value="GMP_synth_GATase"/>
</dbReference>
<dbReference type="InterPro" id="IPR022955">
    <property type="entry name" value="GMP_synthase"/>
</dbReference>
<dbReference type="InterPro" id="IPR025777">
    <property type="entry name" value="GMPS_ATP_PPase_dom"/>
</dbReference>
<dbReference type="InterPro" id="IPR022310">
    <property type="entry name" value="NAD/GMP_synthase"/>
</dbReference>
<dbReference type="InterPro" id="IPR014729">
    <property type="entry name" value="Rossmann-like_a/b/a_fold"/>
</dbReference>
<dbReference type="NCBIfam" id="TIGR00884">
    <property type="entry name" value="guaA_Cterm"/>
    <property type="match status" value="1"/>
</dbReference>
<dbReference type="NCBIfam" id="TIGR00888">
    <property type="entry name" value="guaA_Nterm"/>
    <property type="match status" value="1"/>
</dbReference>
<dbReference type="NCBIfam" id="NF000848">
    <property type="entry name" value="PRK00074.1"/>
    <property type="match status" value="1"/>
</dbReference>
<dbReference type="PANTHER" id="PTHR11922:SF2">
    <property type="entry name" value="GMP SYNTHASE [GLUTAMINE-HYDROLYZING]"/>
    <property type="match status" value="1"/>
</dbReference>
<dbReference type="PANTHER" id="PTHR11922">
    <property type="entry name" value="GMP SYNTHASE-RELATED"/>
    <property type="match status" value="1"/>
</dbReference>
<dbReference type="Pfam" id="PF00117">
    <property type="entry name" value="GATase"/>
    <property type="match status" value="1"/>
</dbReference>
<dbReference type="Pfam" id="PF00958">
    <property type="entry name" value="GMP_synt_C"/>
    <property type="match status" value="1"/>
</dbReference>
<dbReference type="Pfam" id="PF02540">
    <property type="entry name" value="NAD_synthase"/>
    <property type="match status" value="1"/>
</dbReference>
<dbReference type="PRINTS" id="PR00099">
    <property type="entry name" value="CPSGATASE"/>
</dbReference>
<dbReference type="PRINTS" id="PR00096">
    <property type="entry name" value="GATASE"/>
</dbReference>
<dbReference type="SUPFAM" id="SSF52402">
    <property type="entry name" value="Adenine nucleotide alpha hydrolases-like"/>
    <property type="match status" value="1"/>
</dbReference>
<dbReference type="SUPFAM" id="SSF52317">
    <property type="entry name" value="Class I glutamine amidotransferase-like"/>
    <property type="match status" value="1"/>
</dbReference>
<dbReference type="SUPFAM" id="SSF54810">
    <property type="entry name" value="GMP synthetase C-terminal dimerisation domain"/>
    <property type="match status" value="1"/>
</dbReference>
<dbReference type="PROSITE" id="PS51273">
    <property type="entry name" value="GATASE_TYPE_1"/>
    <property type="match status" value="1"/>
</dbReference>
<dbReference type="PROSITE" id="PS51553">
    <property type="entry name" value="GMPS_ATP_PPASE"/>
    <property type="match status" value="1"/>
</dbReference>
<sequence length="517" mass="57976">MANADLSNFDKIIVLDFGSQYNQLITRRIREFGIYSELLSHKITAEEIKKINPKGIIFSGGPNSVYDKDAFRIDPEIYKLGIPILGICYGMQLMTYNLGGRVEPADNREYGHADIDVTDDQAVMFKELPAKQTVWMSHGDLVREVPEGFKTVATSANCPIASMADDARKFYGVQFHAEVRNTQYGNEILRHFAFDVCEAKANWSMNDFIDMQVQQIRETVGDRKVLLGLSGGVDSSVVGVLLNKAIGDQLVCIFVDHGLLRKGEAKQVMDSLEGKFGLNIIKVDAQDRFLSKLAGVSEPEQKRKIIGNEFIQVFNDEAQKLKGIDFLAQGTLYTDVIESGTDTAQTIKSHHNVGGLPEDMHFELIEPLRTLFKDEARDLGEKLGMPEDLVWRQPFPGPGLGIRVIGEITEDKLQIVRDSDLILREEIKKAGLDRDIWQYFTVLPGIRSVGVMGDGRTYDYTVGIRAVNSIDGMTADFARIPWDVLQKISVRIVNEVDHVNRIVYDITSKPPATVEWE</sequence>
<protein>
    <recommendedName>
        <fullName evidence="1">GMP synthase [glutamine-hydrolyzing]</fullName>
        <ecNumber evidence="1">6.3.5.2</ecNumber>
    </recommendedName>
    <alternativeName>
        <fullName evidence="1">GMP synthetase</fullName>
    </alternativeName>
    <alternativeName>
        <fullName evidence="1">Glutamine amidotransferase</fullName>
    </alternativeName>
</protein>
<gene>
    <name evidence="1" type="primary">guaA</name>
    <name type="ordered locus">PEPE_0412</name>
</gene>
<reference key="1">
    <citation type="journal article" date="2006" name="Proc. Natl. Acad. Sci. U.S.A.">
        <title>Comparative genomics of the lactic acid bacteria.</title>
        <authorList>
            <person name="Makarova K.S."/>
            <person name="Slesarev A."/>
            <person name="Wolf Y.I."/>
            <person name="Sorokin A."/>
            <person name="Mirkin B."/>
            <person name="Koonin E.V."/>
            <person name="Pavlov A."/>
            <person name="Pavlova N."/>
            <person name="Karamychev V."/>
            <person name="Polouchine N."/>
            <person name="Shakhova V."/>
            <person name="Grigoriev I."/>
            <person name="Lou Y."/>
            <person name="Rohksar D."/>
            <person name="Lucas S."/>
            <person name="Huang K."/>
            <person name="Goodstein D.M."/>
            <person name="Hawkins T."/>
            <person name="Plengvidhya V."/>
            <person name="Welker D."/>
            <person name="Hughes J."/>
            <person name="Goh Y."/>
            <person name="Benson A."/>
            <person name="Baldwin K."/>
            <person name="Lee J.-H."/>
            <person name="Diaz-Muniz I."/>
            <person name="Dosti B."/>
            <person name="Smeianov V."/>
            <person name="Wechter W."/>
            <person name="Barabote R."/>
            <person name="Lorca G."/>
            <person name="Altermann E."/>
            <person name="Barrangou R."/>
            <person name="Ganesan B."/>
            <person name="Xie Y."/>
            <person name="Rawsthorne H."/>
            <person name="Tamir D."/>
            <person name="Parker C."/>
            <person name="Breidt F."/>
            <person name="Broadbent J.R."/>
            <person name="Hutkins R."/>
            <person name="O'Sullivan D."/>
            <person name="Steele J."/>
            <person name="Unlu G."/>
            <person name="Saier M.H. Jr."/>
            <person name="Klaenhammer T."/>
            <person name="Richardson P."/>
            <person name="Kozyavkin S."/>
            <person name="Weimer B.C."/>
            <person name="Mills D.A."/>
        </authorList>
    </citation>
    <scope>NUCLEOTIDE SEQUENCE [LARGE SCALE GENOMIC DNA]</scope>
    <source>
        <strain>ATCC 25745 / CCUG 21536 / LMG 10740 / 183-1w</strain>
    </source>
</reference>
<keyword id="KW-0067">ATP-binding</keyword>
<keyword id="KW-0315">Glutamine amidotransferase</keyword>
<keyword id="KW-0332">GMP biosynthesis</keyword>
<keyword id="KW-0436">Ligase</keyword>
<keyword id="KW-0547">Nucleotide-binding</keyword>
<keyword id="KW-0658">Purine biosynthesis</keyword>
<organism>
    <name type="scientific">Pediococcus pentosaceus (strain ATCC 25745 / CCUG 21536 / LMG 10740 / 183-1w)</name>
    <dbReference type="NCBI Taxonomy" id="278197"/>
    <lineage>
        <taxon>Bacteria</taxon>
        <taxon>Bacillati</taxon>
        <taxon>Bacillota</taxon>
        <taxon>Bacilli</taxon>
        <taxon>Lactobacillales</taxon>
        <taxon>Lactobacillaceae</taxon>
        <taxon>Pediococcus</taxon>
    </lineage>
</organism>
<comment type="function">
    <text evidence="1">Catalyzes the synthesis of GMP from XMP.</text>
</comment>
<comment type="catalytic activity">
    <reaction evidence="1">
        <text>XMP + L-glutamine + ATP + H2O = GMP + L-glutamate + AMP + diphosphate + 2 H(+)</text>
        <dbReference type="Rhea" id="RHEA:11680"/>
        <dbReference type="ChEBI" id="CHEBI:15377"/>
        <dbReference type="ChEBI" id="CHEBI:15378"/>
        <dbReference type="ChEBI" id="CHEBI:29985"/>
        <dbReference type="ChEBI" id="CHEBI:30616"/>
        <dbReference type="ChEBI" id="CHEBI:33019"/>
        <dbReference type="ChEBI" id="CHEBI:57464"/>
        <dbReference type="ChEBI" id="CHEBI:58115"/>
        <dbReference type="ChEBI" id="CHEBI:58359"/>
        <dbReference type="ChEBI" id="CHEBI:456215"/>
        <dbReference type="EC" id="6.3.5.2"/>
    </reaction>
</comment>
<comment type="pathway">
    <text evidence="1">Purine metabolism; GMP biosynthesis; GMP from XMP (L-Gln route): step 1/1.</text>
</comment>
<comment type="subunit">
    <text evidence="1">Homodimer.</text>
</comment>
<accession>Q03H14</accession>
<proteinExistence type="inferred from homology"/>
<evidence type="ECO:0000255" key="1">
    <source>
        <dbReference type="HAMAP-Rule" id="MF_00344"/>
    </source>
</evidence>
<name>GUAA_PEDPA</name>